<accession>B3PN01</accession>
<comment type="function">
    <text evidence="1">Negative regulator of class I heat shock genes (grpE-dnaK-dnaJ and groELS operons). Prevents heat-shock induction of these operons.</text>
</comment>
<comment type="similarity">
    <text evidence="1">Belongs to the HrcA family.</text>
</comment>
<sequence>MEKRTNYPQLTEKQNHFFKLIVDTYIKTGASVASKELVKRCNLKCSSATIRNVMASLEQIGFLEKYHISSGRVPSTLGLEYYAKFLVYNPKKYFDQKLEDLLAKRRIKIDATLEEAAAIVSEVAGVTVVATSNNAAETMKSIQLTTLSELSAIVVIVTSSGRVESKIFNFENSDISLEDLRVAIRLFKERLVDTPLIHLANKARALTPIFGQQLKNYELILQKFIKNIFVFEEETTNKTFNKGAIVLSRNISREEIANVLDLIEKHSVWESIDNDLDEDNNIKLDVSRPNLSIISKKIDFSNEKNIKEITVIGPNNLDYGESFEALEMLEKIIKEKK</sequence>
<feature type="chain" id="PRO_1000092818" description="Heat-inducible transcription repressor HrcA">
    <location>
        <begin position="1"/>
        <end position="337"/>
    </location>
</feature>
<keyword id="KW-1185">Reference proteome</keyword>
<keyword id="KW-0678">Repressor</keyword>
<keyword id="KW-0346">Stress response</keyword>
<keyword id="KW-0804">Transcription</keyword>
<keyword id="KW-0805">Transcription regulation</keyword>
<dbReference type="EMBL" id="CP001047">
    <property type="protein sequence ID" value="ACF07403.1"/>
    <property type="molecule type" value="Genomic_DNA"/>
</dbReference>
<dbReference type="RefSeq" id="WP_012498360.1">
    <property type="nucleotide sequence ID" value="NC_011025.1"/>
</dbReference>
<dbReference type="SMR" id="B3PN01"/>
<dbReference type="STRING" id="243272.MARTH_orf618"/>
<dbReference type="KEGG" id="mat:MARTH_orf618"/>
<dbReference type="eggNOG" id="COG1420">
    <property type="taxonomic scope" value="Bacteria"/>
</dbReference>
<dbReference type="HOGENOM" id="CLU_050019_1_0_14"/>
<dbReference type="Proteomes" id="UP000008812">
    <property type="component" value="Chromosome"/>
</dbReference>
<dbReference type="GO" id="GO:0003677">
    <property type="term" value="F:DNA binding"/>
    <property type="evidence" value="ECO:0007669"/>
    <property type="project" value="InterPro"/>
</dbReference>
<dbReference type="GO" id="GO:0045892">
    <property type="term" value="P:negative regulation of DNA-templated transcription"/>
    <property type="evidence" value="ECO:0007669"/>
    <property type="project" value="UniProtKB-UniRule"/>
</dbReference>
<dbReference type="Gene3D" id="3.30.450.40">
    <property type="match status" value="1"/>
</dbReference>
<dbReference type="Gene3D" id="3.30.390.60">
    <property type="entry name" value="Heat-inducible transcription repressor hrca homolog, domain 3"/>
    <property type="match status" value="1"/>
</dbReference>
<dbReference type="Gene3D" id="1.10.10.10">
    <property type="entry name" value="Winged helix-like DNA-binding domain superfamily/Winged helix DNA-binding domain"/>
    <property type="match status" value="1"/>
</dbReference>
<dbReference type="HAMAP" id="MF_00081">
    <property type="entry name" value="HrcA"/>
    <property type="match status" value="1"/>
</dbReference>
<dbReference type="InterPro" id="IPR029016">
    <property type="entry name" value="GAF-like_dom_sf"/>
</dbReference>
<dbReference type="InterPro" id="IPR002571">
    <property type="entry name" value="HrcA"/>
</dbReference>
<dbReference type="InterPro" id="IPR021153">
    <property type="entry name" value="HrcA_C"/>
</dbReference>
<dbReference type="InterPro" id="IPR036388">
    <property type="entry name" value="WH-like_DNA-bd_sf"/>
</dbReference>
<dbReference type="InterPro" id="IPR036390">
    <property type="entry name" value="WH_DNA-bd_sf"/>
</dbReference>
<dbReference type="InterPro" id="IPR023120">
    <property type="entry name" value="WHTH_transcript_rep_HrcA_IDD"/>
</dbReference>
<dbReference type="NCBIfam" id="TIGR00331">
    <property type="entry name" value="hrcA"/>
    <property type="match status" value="1"/>
</dbReference>
<dbReference type="PANTHER" id="PTHR34824">
    <property type="entry name" value="HEAT-INDUCIBLE TRANSCRIPTION REPRESSOR HRCA"/>
    <property type="match status" value="1"/>
</dbReference>
<dbReference type="PANTHER" id="PTHR34824:SF1">
    <property type="entry name" value="HEAT-INDUCIBLE TRANSCRIPTION REPRESSOR HRCA"/>
    <property type="match status" value="1"/>
</dbReference>
<dbReference type="Pfam" id="PF01628">
    <property type="entry name" value="HrcA"/>
    <property type="match status" value="1"/>
</dbReference>
<dbReference type="PIRSF" id="PIRSF005485">
    <property type="entry name" value="HrcA"/>
    <property type="match status" value="1"/>
</dbReference>
<dbReference type="SUPFAM" id="SSF55781">
    <property type="entry name" value="GAF domain-like"/>
    <property type="match status" value="1"/>
</dbReference>
<dbReference type="SUPFAM" id="SSF46785">
    <property type="entry name" value="Winged helix' DNA-binding domain"/>
    <property type="match status" value="1"/>
</dbReference>
<proteinExistence type="inferred from homology"/>
<protein>
    <recommendedName>
        <fullName evidence="1">Heat-inducible transcription repressor HrcA</fullName>
    </recommendedName>
</protein>
<gene>
    <name evidence="1" type="primary">hrcA</name>
    <name type="ordered locus">MARTH_orf618</name>
</gene>
<name>HRCA_META1</name>
<reference key="1">
    <citation type="journal article" date="2008" name="Infect. Immun.">
        <title>Genome of Mycoplasma arthritidis.</title>
        <authorList>
            <person name="Dybvig K."/>
            <person name="Zuhua C."/>
            <person name="Lao P."/>
            <person name="Jordan D.S."/>
            <person name="French C.T."/>
            <person name="Tu A.H."/>
            <person name="Loraine A.E."/>
        </authorList>
    </citation>
    <scope>NUCLEOTIDE SEQUENCE [LARGE SCALE GENOMIC DNA]</scope>
    <source>
        <strain>158L3-1</strain>
    </source>
</reference>
<organism>
    <name type="scientific">Metamycoplasma arthritidis (strain 158L3-1)</name>
    <name type="common">Mycoplasma arthritidis</name>
    <dbReference type="NCBI Taxonomy" id="243272"/>
    <lineage>
        <taxon>Bacteria</taxon>
        <taxon>Bacillati</taxon>
        <taxon>Mycoplasmatota</taxon>
        <taxon>Mycoplasmoidales</taxon>
        <taxon>Metamycoplasmataceae</taxon>
        <taxon>Metamycoplasma</taxon>
    </lineage>
</organism>
<evidence type="ECO:0000255" key="1">
    <source>
        <dbReference type="HAMAP-Rule" id="MF_00081"/>
    </source>
</evidence>